<comment type="subcellular location">
    <subcellularLocation>
        <location evidence="1">Cytoplasm</location>
        <location evidence="1">Nucleoid</location>
    </subcellularLocation>
</comment>
<comment type="similarity">
    <text evidence="1">Belongs to the YejK family.</text>
</comment>
<feature type="chain" id="PRO_1000045957" description="Nucleoid-associated protein YE1421">
    <location>
        <begin position="1"/>
        <end position="333"/>
    </location>
</feature>
<accession>A1JLM8</accession>
<protein>
    <recommendedName>
        <fullName evidence="1">Nucleoid-associated protein YE1421</fullName>
    </recommendedName>
</protein>
<organism>
    <name type="scientific">Yersinia enterocolitica serotype O:8 / biotype 1B (strain NCTC 13174 / 8081)</name>
    <dbReference type="NCBI Taxonomy" id="393305"/>
    <lineage>
        <taxon>Bacteria</taxon>
        <taxon>Pseudomonadati</taxon>
        <taxon>Pseudomonadota</taxon>
        <taxon>Gammaproteobacteria</taxon>
        <taxon>Enterobacterales</taxon>
        <taxon>Yersiniaceae</taxon>
        <taxon>Yersinia</taxon>
    </lineage>
</organism>
<gene>
    <name type="ordered locus">YE1421</name>
</gene>
<reference key="1">
    <citation type="journal article" date="2006" name="PLoS Genet.">
        <title>The complete genome sequence and comparative genome analysis of the high pathogenicity Yersinia enterocolitica strain 8081.</title>
        <authorList>
            <person name="Thomson N.R."/>
            <person name="Howard S."/>
            <person name="Wren B.W."/>
            <person name="Holden M.T.G."/>
            <person name="Crossman L."/>
            <person name="Challis G.L."/>
            <person name="Churcher C."/>
            <person name="Mungall K."/>
            <person name="Brooks K."/>
            <person name="Chillingworth T."/>
            <person name="Feltwell T."/>
            <person name="Abdellah Z."/>
            <person name="Hauser H."/>
            <person name="Jagels K."/>
            <person name="Maddison M."/>
            <person name="Moule S."/>
            <person name="Sanders M."/>
            <person name="Whitehead S."/>
            <person name="Quail M.A."/>
            <person name="Dougan G."/>
            <person name="Parkhill J."/>
            <person name="Prentice M.B."/>
        </authorList>
    </citation>
    <scope>NUCLEOTIDE SEQUENCE [LARGE SCALE GENOMIC DNA]</scope>
    <source>
        <strain>NCTC 13174 / 8081</strain>
    </source>
</reference>
<dbReference type="EMBL" id="AM286415">
    <property type="protein sequence ID" value="CAL11511.1"/>
    <property type="molecule type" value="Genomic_DNA"/>
</dbReference>
<dbReference type="RefSeq" id="WP_011815986.1">
    <property type="nucleotide sequence ID" value="NC_008800.1"/>
</dbReference>
<dbReference type="RefSeq" id="YP_001005729.1">
    <property type="nucleotide sequence ID" value="NC_008800.1"/>
</dbReference>
<dbReference type="SMR" id="A1JLM8"/>
<dbReference type="KEGG" id="yen:YE1421"/>
<dbReference type="PATRIC" id="fig|393305.7.peg.1546"/>
<dbReference type="eggNOG" id="COG3081">
    <property type="taxonomic scope" value="Bacteria"/>
</dbReference>
<dbReference type="HOGENOM" id="CLU_063050_0_1_6"/>
<dbReference type="OrthoDB" id="9131762at2"/>
<dbReference type="Proteomes" id="UP000000642">
    <property type="component" value="Chromosome"/>
</dbReference>
<dbReference type="GO" id="GO:0043590">
    <property type="term" value="C:bacterial nucleoid"/>
    <property type="evidence" value="ECO:0007669"/>
    <property type="project" value="TreeGrafter"/>
</dbReference>
<dbReference type="GO" id="GO:0005737">
    <property type="term" value="C:cytoplasm"/>
    <property type="evidence" value="ECO:0007669"/>
    <property type="project" value="UniProtKB-UniRule"/>
</dbReference>
<dbReference type="GO" id="GO:0003690">
    <property type="term" value="F:double-stranded DNA binding"/>
    <property type="evidence" value="ECO:0007669"/>
    <property type="project" value="TreeGrafter"/>
</dbReference>
<dbReference type="GO" id="GO:0003727">
    <property type="term" value="F:single-stranded RNA binding"/>
    <property type="evidence" value="ECO:0007669"/>
    <property type="project" value="TreeGrafter"/>
</dbReference>
<dbReference type="HAMAP" id="MF_00730">
    <property type="entry name" value="NdpA"/>
    <property type="match status" value="1"/>
</dbReference>
<dbReference type="InterPro" id="IPR007358">
    <property type="entry name" value="Nucleoid_associated_NdpA"/>
</dbReference>
<dbReference type="NCBIfam" id="NF001557">
    <property type="entry name" value="PRK00378.1"/>
    <property type="match status" value="1"/>
</dbReference>
<dbReference type="PANTHER" id="PTHR38772">
    <property type="match status" value="1"/>
</dbReference>
<dbReference type="PANTHER" id="PTHR38772:SF1">
    <property type="entry name" value="NUCLEOID-ASSOCIATED PROTEIN YEJK"/>
    <property type="match status" value="1"/>
</dbReference>
<dbReference type="Pfam" id="PF04245">
    <property type="entry name" value="NA37"/>
    <property type="match status" value="1"/>
</dbReference>
<proteinExistence type="inferred from homology"/>
<evidence type="ECO:0000255" key="1">
    <source>
        <dbReference type="HAMAP-Rule" id="MF_00730"/>
    </source>
</evidence>
<name>NDPA_YERE8</name>
<keyword id="KW-0963">Cytoplasm</keyword>
<sequence length="333" mass="37529">MSLDIDQIALHQLVKRDEQTLDVVLRDSLLPANAVVEEMMAELHRVYSAKSKAYGLFNEQSELADALKRSRKGDEDFLSFSRAATGRLRDELAKYPFAEGGVVLFCQYRYLAVEYLLISVLSSCNSMRVNEQLDLSTTHYLDINRADIVARIDLTEWENNPESTRYLTFLKGRVGRKVSDFFMDFLAASEGLDTKAQNRGLLQAVADYCADAELGKNERQAYRQQVYSYCNEQLQAGEEIALQELAQELPKLGEKDFQQFSVEQGYALEESFPADRGTLRQLTKFAGSGGGLSINFDALLLGERIFWDAATDTLTIKGTPPNLRDQLQRNSGK</sequence>